<name>THIM_METM7</name>
<dbReference type="EC" id="2.7.1.50" evidence="1"/>
<dbReference type="EMBL" id="CP000745">
    <property type="protein sequence ID" value="ABR65458.1"/>
    <property type="molecule type" value="Genomic_DNA"/>
</dbReference>
<dbReference type="SMR" id="A6VG82"/>
<dbReference type="STRING" id="426368.MmarC7_0389"/>
<dbReference type="KEGG" id="mmz:MmarC7_0389"/>
<dbReference type="eggNOG" id="arCOG00019">
    <property type="taxonomic scope" value="Archaea"/>
</dbReference>
<dbReference type="HOGENOM" id="CLU_019943_0_0_2"/>
<dbReference type="OrthoDB" id="214286at2157"/>
<dbReference type="UniPathway" id="UPA00060">
    <property type="reaction ID" value="UER00139"/>
</dbReference>
<dbReference type="GO" id="GO:0005524">
    <property type="term" value="F:ATP binding"/>
    <property type="evidence" value="ECO:0007669"/>
    <property type="project" value="UniProtKB-UniRule"/>
</dbReference>
<dbReference type="GO" id="GO:0004417">
    <property type="term" value="F:hydroxyethylthiazole kinase activity"/>
    <property type="evidence" value="ECO:0007669"/>
    <property type="project" value="UniProtKB-UniRule"/>
</dbReference>
<dbReference type="GO" id="GO:0000287">
    <property type="term" value="F:magnesium ion binding"/>
    <property type="evidence" value="ECO:0007669"/>
    <property type="project" value="UniProtKB-UniRule"/>
</dbReference>
<dbReference type="GO" id="GO:0009228">
    <property type="term" value="P:thiamine biosynthetic process"/>
    <property type="evidence" value="ECO:0007669"/>
    <property type="project" value="UniProtKB-KW"/>
</dbReference>
<dbReference type="GO" id="GO:0009229">
    <property type="term" value="P:thiamine diphosphate biosynthetic process"/>
    <property type="evidence" value="ECO:0007669"/>
    <property type="project" value="UniProtKB-UniRule"/>
</dbReference>
<dbReference type="CDD" id="cd01170">
    <property type="entry name" value="THZ_kinase"/>
    <property type="match status" value="1"/>
</dbReference>
<dbReference type="Gene3D" id="3.40.1190.20">
    <property type="match status" value="1"/>
</dbReference>
<dbReference type="HAMAP" id="MF_00228">
    <property type="entry name" value="Thz_kinase"/>
    <property type="match status" value="1"/>
</dbReference>
<dbReference type="InterPro" id="IPR000417">
    <property type="entry name" value="Hyethyz_kinase"/>
</dbReference>
<dbReference type="InterPro" id="IPR029056">
    <property type="entry name" value="Ribokinase-like"/>
</dbReference>
<dbReference type="NCBIfam" id="NF006830">
    <property type="entry name" value="PRK09355.1"/>
    <property type="match status" value="1"/>
</dbReference>
<dbReference type="NCBIfam" id="TIGR00694">
    <property type="entry name" value="thiM"/>
    <property type="match status" value="1"/>
</dbReference>
<dbReference type="Pfam" id="PF02110">
    <property type="entry name" value="HK"/>
    <property type="match status" value="1"/>
</dbReference>
<dbReference type="PIRSF" id="PIRSF000513">
    <property type="entry name" value="Thz_kinase"/>
    <property type="match status" value="1"/>
</dbReference>
<dbReference type="PRINTS" id="PR01099">
    <property type="entry name" value="HYETHTZKNASE"/>
</dbReference>
<dbReference type="SUPFAM" id="SSF53613">
    <property type="entry name" value="Ribokinase-like"/>
    <property type="match status" value="1"/>
</dbReference>
<accession>A6VG82</accession>
<protein>
    <recommendedName>
        <fullName evidence="1">Hydroxyethylthiazole kinase</fullName>
        <ecNumber evidence="1">2.7.1.50</ecNumber>
    </recommendedName>
    <alternativeName>
        <fullName evidence="1">4-methyl-5-beta-hydroxyethylthiazole kinase</fullName>
        <shortName evidence="1">TH kinase</shortName>
        <shortName evidence="1">Thz kinase</shortName>
    </alternativeName>
</protein>
<organism>
    <name type="scientific">Methanococcus maripaludis (strain C7 / ATCC BAA-1331)</name>
    <dbReference type="NCBI Taxonomy" id="426368"/>
    <lineage>
        <taxon>Archaea</taxon>
        <taxon>Methanobacteriati</taxon>
        <taxon>Methanobacteriota</taxon>
        <taxon>Methanomada group</taxon>
        <taxon>Methanococci</taxon>
        <taxon>Methanococcales</taxon>
        <taxon>Methanococcaceae</taxon>
        <taxon>Methanococcus</taxon>
    </lineage>
</organism>
<evidence type="ECO:0000255" key="1">
    <source>
        <dbReference type="HAMAP-Rule" id="MF_00228"/>
    </source>
</evidence>
<sequence length="266" mass="28456">MDFVAKNLTKLRETNPLVQNITNYVVMNSTANSLLALGASPVMAHAMDELEEMVSIASSLVVNIGTLDEYWIPSMEKAAKIATDLKKPIILDPVGAGATKLRTKTALKILDFADISVLRGNFGEIAAVLGEHGKTRGVDSVAYDSNEAIELSKNAAKEFNTVSAVTGPIDYVSNGKELYAISNGHPMLSKVTGTGCASTSIIGAFSAVDEPLKAAVSGLTVYGISAEMAFAEAPYPGTFQAKVYDWLYRIDEKLVLEKAKVNKFEI</sequence>
<reference key="1">
    <citation type="submission" date="2007-06" db="EMBL/GenBank/DDBJ databases">
        <title>Complete sequence of Methanococcus maripaludis C7.</title>
        <authorList>
            <consortium name="US DOE Joint Genome Institute"/>
            <person name="Copeland A."/>
            <person name="Lucas S."/>
            <person name="Lapidus A."/>
            <person name="Barry K."/>
            <person name="Glavina del Rio T."/>
            <person name="Dalin E."/>
            <person name="Tice H."/>
            <person name="Pitluck S."/>
            <person name="Clum A."/>
            <person name="Schmutz J."/>
            <person name="Larimer F."/>
            <person name="Land M."/>
            <person name="Hauser L."/>
            <person name="Kyrpides N."/>
            <person name="Anderson I."/>
            <person name="Sieprawska-Lupa M."/>
            <person name="Whitman W.B."/>
            <person name="Richardson P."/>
        </authorList>
    </citation>
    <scope>NUCLEOTIDE SEQUENCE [LARGE SCALE GENOMIC DNA]</scope>
    <source>
        <strain>C7 / ATCC BAA-1331</strain>
    </source>
</reference>
<gene>
    <name evidence="1" type="primary">thiM</name>
    <name type="ordered locus">MmarC7_0389</name>
</gene>
<keyword id="KW-0067">ATP-binding</keyword>
<keyword id="KW-0418">Kinase</keyword>
<keyword id="KW-0460">Magnesium</keyword>
<keyword id="KW-0479">Metal-binding</keyword>
<keyword id="KW-0547">Nucleotide-binding</keyword>
<keyword id="KW-0784">Thiamine biosynthesis</keyword>
<keyword id="KW-0808">Transferase</keyword>
<proteinExistence type="inferred from homology"/>
<comment type="function">
    <text evidence="1">Catalyzes the phosphorylation of the hydroxyl group of 4-methyl-5-beta-hydroxyethylthiazole (THZ).</text>
</comment>
<comment type="catalytic activity">
    <reaction evidence="1">
        <text>5-(2-hydroxyethyl)-4-methylthiazole + ATP = 4-methyl-5-(2-phosphooxyethyl)-thiazole + ADP + H(+)</text>
        <dbReference type="Rhea" id="RHEA:24212"/>
        <dbReference type="ChEBI" id="CHEBI:15378"/>
        <dbReference type="ChEBI" id="CHEBI:17957"/>
        <dbReference type="ChEBI" id="CHEBI:30616"/>
        <dbReference type="ChEBI" id="CHEBI:58296"/>
        <dbReference type="ChEBI" id="CHEBI:456216"/>
        <dbReference type="EC" id="2.7.1.50"/>
    </reaction>
</comment>
<comment type="cofactor">
    <cofactor evidence="1">
        <name>Mg(2+)</name>
        <dbReference type="ChEBI" id="CHEBI:18420"/>
    </cofactor>
</comment>
<comment type="pathway">
    <text evidence="1">Cofactor biosynthesis; thiamine diphosphate biosynthesis; 4-methyl-5-(2-phosphoethyl)-thiazole from 5-(2-hydroxyethyl)-4-methylthiazole: step 1/1.</text>
</comment>
<comment type="similarity">
    <text evidence="1">Belongs to the Thz kinase family.</text>
</comment>
<feature type="chain" id="PRO_1000021521" description="Hydroxyethylthiazole kinase">
    <location>
        <begin position="1"/>
        <end position="266"/>
    </location>
</feature>
<feature type="binding site" evidence="1">
    <location>
        <position position="43"/>
    </location>
    <ligand>
        <name>substrate</name>
    </ligand>
</feature>
<feature type="binding site" evidence="1">
    <location>
        <position position="119"/>
    </location>
    <ligand>
        <name>ATP</name>
        <dbReference type="ChEBI" id="CHEBI:30616"/>
    </ligand>
</feature>
<feature type="binding site" evidence="1">
    <location>
        <position position="166"/>
    </location>
    <ligand>
        <name>ATP</name>
        <dbReference type="ChEBI" id="CHEBI:30616"/>
    </ligand>
</feature>
<feature type="binding site" evidence="1">
    <location>
        <position position="193"/>
    </location>
    <ligand>
        <name>substrate</name>
    </ligand>
</feature>